<keyword id="KW-0687">Ribonucleoprotein</keyword>
<keyword id="KW-0689">Ribosomal protein</keyword>
<keyword id="KW-0694">RNA-binding</keyword>
<keyword id="KW-0699">rRNA-binding</keyword>
<organism>
    <name type="scientific">Yersinia pseudotuberculosis serotype O:3 (strain YPIII)</name>
    <dbReference type="NCBI Taxonomy" id="502800"/>
    <lineage>
        <taxon>Bacteria</taxon>
        <taxon>Pseudomonadati</taxon>
        <taxon>Pseudomonadota</taxon>
        <taxon>Gammaproteobacteria</taxon>
        <taxon>Enterobacterales</taxon>
        <taxon>Yersiniaceae</taxon>
        <taxon>Yersinia</taxon>
    </lineage>
</organism>
<proteinExistence type="inferred from homology"/>
<feature type="chain" id="PRO_1000143328" description="Small ribosomal subunit protein uS17">
    <location>
        <begin position="1"/>
        <end position="84"/>
    </location>
</feature>
<protein>
    <recommendedName>
        <fullName evidence="1">Small ribosomal subunit protein uS17</fullName>
    </recommendedName>
    <alternativeName>
        <fullName evidence="2">30S ribosomal protein S17</fullName>
    </alternativeName>
</protein>
<evidence type="ECO:0000255" key="1">
    <source>
        <dbReference type="HAMAP-Rule" id="MF_01345"/>
    </source>
</evidence>
<evidence type="ECO:0000305" key="2"/>
<accession>B1JIX0</accession>
<gene>
    <name evidence="1" type="primary">rpsQ</name>
    <name type="ordered locus">YPK_0292</name>
</gene>
<reference key="1">
    <citation type="submission" date="2008-02" db="EMBL/GenBank/DDBJ databases">
        <title>Complete sequence of Yersinia pseudotuberculosis YPIII.</title>
        <authorList>
            <consortium name="US DOE Joint Genome Institute"/>
            <person name="Copeland A."/>
            <person name="Lucas S."/>
            <person name="Lapidus A."/>
            <person name="Glavina del Rio T."/>
            <person name="Dalin E."/>
            <person name="Tice H."/>
            <person name="Bruce D."/>
            <person name="Goodwin L."/>
            <person name="Pitluck S."/>
            <person name="Munk A.C."/>
            <person name="Brettin T."/>
            <person name="Detter J.C."/>
            <person name="Han C."/>
            <person name="Tapia R."/>
            <person name="Schmutz J."/>
            <person name="Larimer F."/>
            <person name="Land M."/>
            <person name="Hauser L."/>
            <person name="Challacombe J.F."/>
            <person name="Green L."/>
            <person name="Lindler L.E."/>
            <person name="Nikolich M.P."/>
            <person name="Richardson P."/>
        </authorList>
    </citation>
    <scope>NUCLEOTIDE SEQUENCE [LARGE SCALE GENOMIC DNA]</scope>
    <source>
        <strain>YPIII</strain>
    </source>
</reference>
<dbReference type="EMBL" id="CP000950">
    <property type="protein sequence ID" value="ACA66605.1"/>
    <property type="molecule type" value="Genomic_DNA"/>
</dbReference>
<dbReference type="RefSeq" id="WP_002228135.1">
    <property type="nucleotide sequence ID" value="NZ_CP009792.1"/>
</dbReference>
<dbReference type="SMR" id="B1JIX0"/>
<dbReference type="GeneID" id="97454240"/>
<dbReference type="KEGG" id="ypy:YPK_0292"/>
<dbReference type="PATRIC" id="fig|502800.11.peg.899"/>
<dbReference type="GO" id="GO:0022627">
    <property type="term" value="C:cytosolic small ribosomal subunit"/>
    <property type="evidence" value="ECO:0007669"/>
    <property type="project" value="TreeGrafter"/>
</dbReference>
<dbReference type="GO" id="GO:0019843">
    <property type="term" value="F:rRNA binding"/>
    <property type="evidence" value="ECO:0007669"/>
    <property type="project" value="UniProtKB-UniRule"/>
</dbReference>
<dbReference type="GO" id="GO:0003735">
    <property type="term" value="F:structural constituent of ribosome"/>
    <property type="evidence" value="ECO:0007669"/>
    <property type="project" value="InterPro"/>
</dbReference>
<dbReference type="GO" id="GO:0006412">
    <property type="term" value="P:translation"/>
    <property type="evidence" value="ECO:0007669"/>
    <property type="project" value="UniProtKB-UniRule"/>
</dbReference>
<dbReference type="CDD" id="cd00364">
    <property type="entry name" value="Ribosomal_uS17"/>
    <property type="match status" value="1"/>
</dbReference>
<dbReference type="FunFam" id="2.40.50.140:FF:000014">
    <property type="entry name" value="30S ribosomal protein S17"/>
    <property type="match status" value="1"/>
</dbReference>
<dbReference type="Gene3D" id="2.40.50.140">
    <property type="entry name" value="Nucleic acid-binding proteins"/>
    <property type="match status" value="1"/>
</dbReference>
<dbReference type="HAMAP" id="MF_01345_B">
    <property type="entry name" value="Ribosomal_uS17_B"/>
    <property type="match status" value="1"/>
</dbReference>
<dbReference type="InterPro" id="IPR012340">
    <property type="entry name" value="NA-bd_OB-fold"/>
</dbReference>
<dbReference type="InterPro" id="IPR000266">
    <property type="entry name" value="Ribosomal_uS17"/>
</dbReference>
<dbReference type="InterPro" id="IPR019984">
    <property type="entry name" value="Ribosomal_uS17_bact/chlr"/>
</dbReference>
<dbReference type="InterPro" id="IPR019979">
    <property type="entry name" value="Ribosomal_uS17_CS"/>
</dbReference>
<dbReference type="NCBIfam" id="NF004123">
    <property type="entry name" value="PRK05610.1"/>
    <property type="match status" value="1"/>
</dbReference>
<dbReference type="NCBIfam" id="TIGR03635">
    <property type="entry name" value="uS17_bact"/>
    <property type="match status" value="1"/>
</dbReference>
<dbReference type="PANTHER" id="PTHR10744">
    <property type="entry name" value="40S RIBOSOMAL PROTEIN S11 FAMILY MEMBER"/>
    <property type="match status" value="1"/>
</dbReference>
<dbReference type="PANTHER" id="PTHR10744:SF1">
    <property type="entry name" value="SMALL RIBOSOMAL SUBUNIT PROTEIN US17M"/>
    <property type="match status" value="1"/>
</dbReference>
<dbReference type="Pfam" id="PF00366">
    <property type="entry name" value="Ribosomal_S17"/>
    <property type="match status" value="1"/>
</dbReference>
<dbReference type="PRINTS" id="PR00973">
    <property type="entry name" value="RIBOSOMALS17"/>
</dbReference>
<dbReference type="SUPFAM" id="SSF50249">
    <property type="entry name" value="Nucleic acid-binding proteins"/>
    <property type="match status" value="1"/>
</dbReference>
<dbReference type="PROSITE" id="PS00056">
    <property type="entry name" value="RIBOSOMAL_S17"/>
    <property type="match status" value="1"/>
</dbReference>
<name>RS17_YERPY</name>
<comment type="function">
    <text evidence="1">One of the primary rRNA binding proteins, it binds specifically to the 5'-end of 16S ribosomal RNA.</text>
</comment>
<comment type="subunit">
    <text evidence="1">Part of the 30S ribosomal subunit.</text>
</comment>
<comment type="similarity">
    <text evidence="1">Belongs to the universal ribosomal protein uS17 family.</text>
</comment>
<sequence length="84" mass="9716">MTDQIRTLQGRVVSDKMEKSMVVAIERVVKHPIYGKFIRRTTKLHVHDENNECGIGDVVEIRECRPLSKTKSWTLVRVVEKAIL</sequence>